<geneLocation type="plasmid">
    <name>pAO1</name>
</geneLocation>
<name>NDHL_PAENI</name>
<feature type="chain" id="PRO_0000459755" description="Nicotine 6-hydroxylase large subunit">
    <location>
        <begin position="1"/>
        <end position="816"/>
    </location>
</feature>
<feature type="binding site" evidence="1">
    <location>
        <position position="745"/>
    </location>
    <ligand>
        <name>Mo-molybdopterin cytosine dinucleotide</name>
        <dbReference type="ChEBI" id="CHEBI:71308"/>
    </ligand>
    <ligandPart>
        <name>Mo</name>
        <dbReference type="ChEBI" id="CHEBI:28685"/>
    </ligandPart>
</feature>
<feature type="sequence conflict" description="In Ref. 1; CAA53088." evidence="7" ref="1">
    <original>AVTPTGVYDIPAAEYVYEGAVTNKC</original>
    <variation>QSRQLVYTISRPLSTSTRGPLPS</variation>
    <location>
        <begin position="344"/>
        <end position="368"/>
    </location>
</feature>
<protein>
    <recommendedName>
        <fullName evidence="7">Nicotine 6-hydroxylase large subunit</fullName>
        <ecNumber evidence="2 3">1.5.99.4</ecNumber>
    </recommendedName>
    <alternativeName>
        <fullName evidence="4">Nicotine dehydrogenase large subunit</fullName>
    </alternativeName>
    <alternativeName>
        <fullName evidence="6">Nicotine dehydrogenase subunit C</fullName>
        <shortName evidence="6">NDH C</shortName>
    </alternativeName>
</protein>
<organism>
    <name type="scientific">Paenarthrobacter nicotinovorans</name>
    <name type="common">Arthrobacter nicotinovorans</name>
    <dbReference type="NCBI Taxonomy" id="29320"/>
    <lineage>
        <taxon>Bacteria</taxon>
        <taxon>Bacillati</taxon>
        <taxon>Actinomycetota</taxon>
        <taxon>Actinomycetes</taxon>
        <taxon>Micrococcales</taxon>
        <taxon>Micrococcaceae</taxon>
        <taxon>Paenarthrobacter</taxon>
    </lineage>
</organism>
<reference evidence="10" key="1">
    <citation type="journal article" date="1994" name="Mol. Microbiol.">
        <title>Structural analysis and molybdenum-dependent expression of the pAO1-encoded nicotine dehydrogenase genes of Arthrobacter nicotinovorans.</title>
        <authorList>
            <person name="Grether-Beck S."/>
            <person name="Igloi G.L."/>
            <person name="Pust S."/>
            <person name="Schiltz E."/>
            <person name="Decker K."/>
            <person name="Brandsch R."/>
        </authorList>
    </citation>
    <scope>NUCLEOTIDE SEQUENCE [GENOMIC DNA]</scope>
    <scope>FUNCTION</scope>
    <scope>CATALYTIC ACTIVITY</scope>
    <scope>ACTIVITY REGULATION</scope>
    <scope>SUBUNIT</scope>
    <scope>SUBCELLULAR LOCATION</scope>
    <scope>INDUCTION</scope>
</reference>
<reference evidence="9" key="2">
    <citation type="journal article" date="2001" name="J. Bacteriol.">
        <title>Gene cluster on pAO1 of Arthrobacter nicotinovorans involved in degradation of the plant alkaloid nicotine: cloning, purification, and characterization of 2,6-dihydroxypyridine 3-hydroxylase.</title>
        <authorList>
            <person name="Baitsch D."/>
            <person name="Sandu C."/>
            <person name="Brandsch R."/>
            <person name="Igloi G.L."/>
        </authorList>
    </citation>
    <scope>NUCLEOTIDE SEQUENCE [GENOMIC DNA]</scope>
    <source>
        <strain>ATCC 49919 / DSM 420 / JCM 3874 / KCTC 9902 / LMG 16253 / NBRC 15511</strain>
        <plasmid>pAO1</plasmid>
    </source>
</reference>
<reference evidence="11" key="3">
    <citation type="journal article" date="2003" name="J. Bacteriol.">
        <title>Sequence of the 165-kilobase catabolic plasmid pAO1 from Arthrobacter nicotinovorans and identification of a pAO1-dependent nicotine uptake system.</title>
        <authorList>
            <person name="Igloi G.L."/>
            <person name="Brandsch R."/>
        </authorList>
    </citation>
    <scope>NUCLEOTIDE SEQUENCE [LARGE SCALE GENOMIC DNA]</scope>
    <source>
        <strain>ATCC 49919 / DSM 420 / JCM 3874 / KCTC 9902 / LMG 16253 / NBRC 15511</strain>
        <plasmid>pAO1</plasmid>
    </source>
</reference>
<reference key="4">
    <citation type="journal article" date="1965" name="Biochim. Biophys. Acta">
        <title>Induction and purification of stereospecific nicotine oxidizing enzymes from Arthrobacter oxidans.</title>
        <authorList>
            <person name="Decker K."/>
            <person name="Bleeg H."/>
        </authorList>
    </citation>
    <scope>FUNCTION</scope>
    <scope>CATALYTIC ACTIVITY</scope>
</reference>
<reference key="5">
    <citation type="journal article" date="2013" name="ScientificWorldJournal">
        <title>Current status on biochemistry and molecular biology of microbial degradation of nicotine.</title>
        <authorList>
            <person name="Gurusamy R."/>
            <person name="Natarajan S."/>
        </authorList>
    </citation>
    <scope>BIOTECHNOLOGY</scope>
    <scope>REVIEW</scope>
</reference>
<proteinExistence type="evidence at protein level"/>
<gene>
    <name evidence="4" type="primary">ndhL</name>
    <name evidence="6" type="synonym">ndhC</name>
</gene>
<evidence type="ECO:0000250" key="1">
    <source>
        <dbReference type="UniProtKB" id="P19919"/>
    </source>
</evidence>
<evidence type="ECO:0000269" key="2">
    <source>
    </source>
</evidence>
<evidence type="ECO:0000269" key="3">
    <source>
    </source>
</evidence>
<evidence type="ECO:0000303" key="4">
    <source>
    </source>
</evidence>
<evidence type="ECO:0000303" key="5">
    <source>
    </source>
</evidence>
<evidence type="ECO:0000303" key="6">
    <source>
    </source>
</evidence>
<evidence type="ECO:0000305" key="7"/>
<evidence type="ECO:0000305" key="8">
    <source>
    </source>
</evidence>
<evidence type="ECO:0000312" key="9">
    <source>
        <dbReference type="EMBL" id="AAK64263.1"/>
    </source>
</evidence>
<evidence type="ECO:0000312" key="10">
    <source>
        <dbReference type="EMBL" id="CAA53088.1"/>
    </source>
</evidence>
<evidence type="ECO:0000312" key="11">
    <source>
        <dbReference type="EMBL" id="CAD47952.1"/>
    </source>
</evidence>
<sequence length="816" mass="87753">MDNPHYYSPPITRNVIGKRVPRTEDARLLTGRGKYLNDINVDGQLHACFVRSPAAHAQITGIDTSAASEMPGVHLVWTSADIEQYCAGIEAQYTAEGCEAMTMPLLAKDVVRYVGEPVVLVVAESRAAAEDACDLVGLELEHLEVVLDPRKSIQGGPVANGERPDNVGIRGRASFGDVDEAFSNAEHVVSALYHPGRVAAAPMETRGCLADYEWTEDRLKLWVSTQMPHYVKMCLSLFLGFDESRSEVISPDTGGGFGQKAHVFPEEMLMPLASKHLKTPVKWVEDRRENLLAGSHAHEQFVTIQYAANAEGRITGVRTHALVDGGAYHMPPQTMAVECWATAAVTPTGVYDIPAAEYVYEGAVTNKCPMGAFRGVGYTAGTLARESLMDDLARKMKVSPFEIRRRNVVREFPWTNPQGVVYEEGSFLEVIDALEEMVDYPAFLRRQDEARKAGKYLGLGISVFVESSGESTGMMQAHGATDVFHDTATVKMDSTGSVTITSGLNSQGQGHQTTLAQVAADVLGIPFESISVDAGTSTKGAYGSGTIGSRAAVIAGGCVNRAAYAIRQKLVAVAANMLESSEEDIVLEDGFASVIGAAESRVSIADVAMAVYWDSSKWPAGFEPGLEFTKAWDTSRPMFSNGGHALIVELDPVTGFVKVEKVYSVEDCGVIINPTIVEGQIRGGVVQGIGMGLFEQLAYDNAGNLSTTSFLDYQTPTMDVSPPFEIRHIETPSVMTASGVKGMGESGLISAPAAVLNAVNDALSPFGSVLYELPATPEKVVRATKGIIDLQGPQDWSELWERAGVPALDRGPMDRE</sequence>
<dbReference type="EC" id="1.5.99.4" evidence="2 3"/>
<dbReference type="EMBL" id="X75338">
    <property type="protein sequence ID" value="CAA53088.1"/>
    <property type="molecule type" value="Genomic_DNA"/>
</dbReference>
<dbReference type="EMBL" id="AF373840">
    <property type="protein sequence ID" value="AAK64263.1"/>
    <property type="molecule type" value="Genomic_DNA"/>
</dbReference>
<dbReference type="EMBL" id="AJ507836">
    <property type="protein sequence ID" value="CAD47952.1"/>
    <property type="molecule type" value="Genomic_DNA"/>
</dbReference>
<dbReference type="PIR" id="I39627">
    <property type="entry name" value="I39627"/>
</dbReference>
<dbReference type="RefSeq" id="WP_016359463.1">
    <property type="nucleotide sequence ID" value="NC_021229.1"/>
</dbReference>
<dbReference type="RefSeq" id="YP_007988778.1">
    <property type="nucleotide sequence ID" value="NC_021229.1"/>
</dbReference>
<dbReference type="SMR" id="Q93NH5"/>
<dbReference type="GeneID" id="84020295"/>
<dbReference type="KEGG" id="ag:CAA53088"/>
<dbReference type="BioCyc" id="MetaCyc:MONOMER-963"/>
<dbReference type="BRENDA" id="1.5.99.4">
    <property type="organism ID" value="449"/>
</dbReference>
<dbReference type="UniPathway" id="UPA00106">
    <property type="reaction ID" value="UER00487"/>
</dbReference>
<dbReference type="UniPathway" id="UPA00106">
    <property type="reaction ID" value="UER00918"/>
</dbReference>
<dbReference type="GO" id="GO:0005737">
    <property type="term" value="C:cytoplasm"/>
    <property type="evidence" value="ECO:0007669"/>
    <property type="project" value="UniProtKB-SubCell"/>
</dbReference>
<dbReference type="GO" id="GO:0005506">
    <property type="term" value="F:iron ion binding"/>
    <property type="evidence" value="ECO:0007669"/>
    <property type="project" value="InterPro"/>
</dbReference>
<dbReference type="GO" id="GO:0018535">
    <property type="term" value="F:nicotine dehydrogenase activity"/>
    <property type="evidence" value="ECO:0007669"/>
    <property type="project" value="UniProtKB-EC"/>
</dbReference>
<dbReference type="GO" id="GO:0009820">
    <property type="term" value="P:alkaloid metabolic process"/>
    <property type="evidence" value="ECO:0007669"/>
    <property type="project" value="UniProtKB-KW"/>
</dbReference>
<dbReference type="GO" id="GO:0019608">
    <property type="term" value="P:nicotine catabolic process"/>
    <property type="evidence" value="ECO:0007669"/>
    <property type="project" value="UniProtKB-UniPathway"/>
</dbReference>
<dbReference type="Gene3D" id="3.90.1170.50">
    <property type="entry name" value="Aldehyde oxidase/xanthine dehydrogenase, a/b hammerhead"/>
    <property type="match status" value="1"/>
</dbReference>
<dbReference type="Gene3D" id="3.30.365.10">
    <property type="entry name" value="Aldehyde oxidase/xanthine dehydrogenase, molybdopterin binding domain"/>
    <property type="match status" value="4"/>
</dbReference>
<dbReference type="InterPro" id="IPR000674">
    <property type="entry name" value="Ald_Oxase/Xan_DH_a/b"/>
</dbReference>
<dbReference type="InterPro" id="IPR036856">
    <property type="entry name" value="Ald_Oxase/Xan_DH_a/b_sf"/>
</dbReference>
<dbReference type="InterPro" id="IPR016208">
    <property type="entry name" value="Ald_Oxase/xanthine_DH-like"/>
</dbReference>
<dbReference type="InterPro" id="IPR008274">
    <property type="entry name" value="AldOxase/xan_DH_MoCoBD1"/>
</dbReference>
<dbReference type="InterPro" id="IPR046867">
    <property type="entry name" value="AldOxase/xan_DH_MoCoBD2"/>
</dbReference>
<dbReference type="InterPro" id="IPR037165">
    <property type="entry name" value="AldOxase/xan_DH_Mopterin-bd_sf"/>
</dbReference>
<dbReference type="PANTHER" id="PTHR11908:SF132">
    <property type="entry name" value="ALDEHYDE OXIDASE 1-RELATED"/>
    <property type="match status" value="1"/>
</dbReference>
<dbReference type="PANTHER" id="PTHR11908">
    <property type="entry name" value="XANTHINE DEHYDROGENASE"/>
    <property type="match status" value="1"/>
</dbReference>
<dbReference type="Pfam" id="PF01315">
    <property type="entry name" value="Ald_Xan_dh_C"/>
    <property type="match status" value="1"/>
</dbReference>
<dbReference type="Pfam" id="PF02738">
    <property type="entry name" value="MoCoBD_1"/>
    <property type="match status" value="1"/>
</dbReference>
<dbReference type="Pfam" id="PF20256">
    <property type="entry name" value="MoCoBD_2"/>
    <property type="match status" value="1"/>
</dbReference>
<dbReference type="SMART" id="SM01008">
    <property type="entry name" value="Ald_Xan_dh_C"/>
    <property type="match status" value="1"/>
</dbReference>
<dbReference type="SUPFAM" id="SSF54665">
    <property type="entry name" value="CO dehydrogenase molybdoprotein N-domain-like"/>
    <property type="match status" value="1"/>
</dbReference>
<dbReference type="SUPFAM" id="SSF56003">
    <property type="entry name" value="Molybdenum cofactor-binding domain"/>
    <property type="match status" value="1"/>
</dbReference>
<keyword id="KW-0017">Alkaloid metabolism</keyword>
<keyword id="KW-0963">Cytoplasm</keyword>
<keyword id="KW-0479">Metal-binding</keyword>
<keyword id="KW-0500">Molybdenum</keyword>
<keyword id="KW-0560">Oxidoreductase</keyword>
<keyword id="KW-0614">Plasmid</keyword>
<accession>Q93NH5</accession>
<accession>Q59129</accession>
<comment type="function">
    <text evidence="2 3">Component of the nicotine 6-hydroxylase, which is involved in the degradation of nicotine (PubMed:5849820, PubMed:7815950). Catalyzes the hydroxylation of the pyridine ring at C6 to form 6-hydroxynicotine (PubMed:5849820, PubMed:7815950). Can use both L-nicotine and D-nicotine (PubMed:5849820, PubMed:7815950).</text>
</comment>
<comment type="catalytic activity">
    <reaction evidence="2 3">
        <text>(R)-nicotine + A + H2O = (R)-6-hydroxynicotine + AH2</text>
        <dbReference type="Rhea" id="RHEA:42352"/>
        <dbReference type="ChEBI" id="CHEBI:13193"/>
        <dbReference type="ChEBI" id="CHEBI:15377"/>
        <dbReference type="ChEBI" id="CHEBI:17499"/>
        <dbReference type="ChEBI" id="CHEBI:58413"/>
        <dbReference type="ChEBI" id="CHEBI:79008"/>
        <dbReference type="EC" id="1.5.99.4"/>
    </reaction>
    <physiologicalReaction direction="left-to-right" evidence="2 3">
        <dbReference type="Rhea" id="RHEA:42353"/>
    </physiologicalReaction>
</comment>
<comment type="catalytic activity">
    <reaction evidence="2 3">
        <text>(S)-nicotine + A + H2O = (S)-6-hydroxynicotine + AH2</text>
        <dbReference type="Rhea" id="RHEA:14769"/>
        <dbReference type="ChEBI" id="CHEBI:13193"/>
        <dbReference type="ChEBI" id="CHEBI:15377"/>
        <dbReference type="ChEBI" id="CHEBI:17499"/>
        <dbReference type="ChEBI" id="CHEBI:58182"/>
        <dbReference type="ChEBI" id="CHEBI:59806"/>
        <dbReference type="EC" id="1.5.99.4"/>
    </reaction>
    <physiologicalReaction direction="left-to-right" evidence="2 3">
        <dbReference type="Rhea" id="RHEA:14770"/>
    </physiologicalReaction>
</comment>
<comment type="cofactor">
    <cofactor evidence="1">
        <name>Mo-molybdopterin cytosine dinucleotide</name>
        <dbReference type="ChEBI" id="CHEBI:71308"/>
    </cofactor>
    <text evidence="1">Binds 1 Mo-molybdopterin cytosine dinucleotide (Mo-MCD) cofactor per subunit.</text>
</comment>
<comment type="activity regulation">
    <text evidence="3">Nicotine dehydrogenase activity is inhibited by tungsten.</text>
</comment>
<comment type="pathway">
    <text evidence="8">Alkaloid degradation; nicotine degradation; 6-hydroxypseudooxynicotine from nicotine (R-isomer route): step 1/2.</text>
</comment>
<comment type="pathway">
    <text evidence="8">Alkaloid degradation; nicotine degradation; 6-hydroxypseudooxynicotine from nicotine (S-isomer route): step 1/2.</text>
</comment>
<comment type="subunit">
    <text evidence="3">Heterotrimer composed of a large subunit (NdhL), a medium subunit (NdhM) and a small subunit (NdhS).</text>
</comment>
<comment type="subcellular location">
    <subcellularLocation>
        <location evidence="3">Cytoplasm</location>
    </subcellularLocation>
    <text evidence="3">Also present in a membrane-associated form (PubMed:7815950). The presence of tungstate increases the proportion of membrane-bound enzyme (PubMed:7815950).</text>
</comment>
<comment type="induction">
    <text evidence="3">Expression requires the presence of nicotine and molybdenum.</text>
</comment>
<comment type="biotechnology">
    <text evidence="5">Due to the increased usage of tobacco products, the industry generates solid and liquid tobacco wastes containing high concentrations of nicotine, which dissolves easily in water leading to the contamination of the ground water (PubMed:24470788). Nicotine-degrading microbes can be used for bioremediation of these nicotine-polluted environments (PubMed:24470788).</text>
</comment>
<comment type="similarity">
    <text evidence="7">Belongs to the xanthine dehydrogenase family.</text>
</comment>